<keyword id="KW-0066">ATP synthesis</keyword>
<keyword id="KW-1003">Cell membrane</keyword>
<keyword id="KW-0139">CF(1)</keyword>
<keyword id="KW-0375">Hydrogen ion transport</keyword>
<keyword id="KW-0406">Ion transport</keyword>
<keyword id="KW-0472">Membrane</keyword>
<keyword id="KW-1185">Reference proteome</keyword>
<keyword id="KW-0813">Transport</keyword>
<proteinExistence type="inferred from homology"/>
<dbReference type="EMBL" id="AE017308">
    <property type="protein sequence ID" value="AAT27693.1"/>
    <property type="molecule type" value="Genomic_DNA"/>
</dbReference>
<dbReference type="RefSeq" id="WP_011264727.1">
    <property type="nucleotide sequence ID" value="NC_006908.1"/>
</dbReference>
<dbReference type="SMR" id="Q6KI83"/>
<dbReference type="STRING" id="267748.MMOB2070"/>
<dbReference type="KEGG" id="mmo:MMOB2070"/>
<dbReference type="eggNOG" id="COG0355">
    <property type="taxonomic scope" value="Bacteria"/>
</dbReference>
<dbReference type="HOGENOM" id="CLU_084338_1_3_14"/>
<dbReference type="OrthoDB" id="389606at2"/>
<dbReference type="Proteomes" id="UP000009072">
    <property type="component" value="Chromosome"/>
</dbReference>
<dbReference type="GO" id="GO:0005886">
    <property type="term" value="C:plasma membrane"/>
    <property type="evidence" value="ECO:0007669"/>
    <property type="project" value="UniProtKB-SubCell"/>
</dbReference>
<dbReference type="GO" id="GO:0045259">
    <property type="term" value="C:proton-transporting ATP synthase complex"/>
    <property type="evidence" value="ECO:0007669"/>
    <property type="project" value="UniProtKB-KW"/>
</dbReference>
<dbReference type="GO" id="GO:0005524">
    <property type="term" value="F:ATP binding"/>
    <property type="evidence" value="ECO:0007669"/>
    <property type="project" value="UniProtKB-UniRule"/>
</dbReference>
<dbReference type="GO" id="GO:0046933">
    <property type="term" value="F:proton-transporting ATP synthase activity, rotational mechanism"/>
    <property type="evidence" value="ECO:0007669"/>
    <property type="project" value="UniProtKB-UniRule"/>
</dbReference>
<dbReference type="CDD" id="cd12152">
    <property type="entry name" value="F1-ATPase_delta"/>
    <property type="match status" value="1"/>
</dbReference>
<dbReference type="Gene3D" id="2.60.15.10">
    <property type="entry name" value="F0F1 ATP synthase delta/epsilon subunit, N-terminal"/>
    <property type="match status" value="1"/>
</dbReference>
<dbReference type="HAMAP" id="MF_00530">
    <property type="entry name" value="ATP_synth_epsil_bac"/>
    <property type="match status" value="1"/>
</dbReference>
<dbReference type="InterPro" id="IPR001469">
    <property type="entry name" value="ATP_synth_F1_dsu/esu"/>
</dbReference>
<dbReference type="InterPro" id="IPR020546">
    <property type="entry name" value="ATP_synth_F1_dsu/esu_N"/>
</dbReference>
<dbReference type="InterPro" id="IPR036771">
    <property type="entry name" value="ATPsynth_dsu/esu_N"/>
</dbReference>
<dbReference type="NCBIfam" id="TIGR01216">
    <property type="entry name" value="ATP_synt_epsi"/>
    <property type="match status" value="1"/>
</dbReference>
<dbReference type="PANTHER" id="PTHR13822">
    <property type="entry name" value="ATP SYNTHASE DELTA/EPSILON CHAIN"/>
    <property type="match status" value="1"/>
</dbReference>
<dbReference type="PANTHER" id="PTHR13822:SF10">
    <property type="entry name" value="ATP SYNTHASE EPSILON CHAIN, CHLOROPLASTIC"/>
    <property type="match status" value="1"/>
</dbReference>
<dbReference type="Pfam" id="PF02823">
    <property type="entry name" value="ATP-synt_DE_N"/>
    <property type="match status" value="1"/>
</dbReference>
<dbReference type="SUPFAM" id="SSF51344">
    <property type="entry name" value="Epsilon subunit of F1F0-ATP synthase N-terminal domain"/>
    <property type="match status" value="1"/>
</dbReference>
<name>ATPE_MYCM1</name>
<reference key="1">
    <citation type="journal article" date="2004" name="Genome Res.">
        <title>The complete genome and proteome of Mycoplasma mobile.</title>
        <authorList>
            <person name="Jaffe J.D."/>
            <person name="Stange-Thomann N."/>
            <person name="Smith C."/>
            <person name="DeCaprio D."/>
            <person name="Fisher S."/>
            <person name="Butler J."/>
            <person name="Calvo S."/>
            <person name="Elkins T."/>
            <person name="FitzGerald M.G."/>
            <person name="Hafez N."/>
            <person name="Kodira C.D."/>
            <person name="Major J."/>
            <person name="Wang S."/>
            <person name="Wilkinson J."/>
            <person name="Nicol R."/>
            <person name="Nusbaum C."/>
            <person name="Birren B."/>
            <person name="Berg H.C."/>
            <person name="Church G.M."/>
        </authorList>
    </citation>
    <scope>NUCLEOTIDE SEQUENCE [LARGE SCALE GENOMIC DNA]</scope>
    <source>
        <strain>ATCC 43663 / NCTC 11711 / 163 K</strain>
    </source>
</reference>
<evidence type="ECO:0000255" key="1">
    <source>
        <dbReference type="HAMAP-Rule" id="MF_00530"/>
    </source>
</evidence>
<comment type="function">
    <text evidence="1">Produces ATP from ADP in the presence of a proton gradient across the membrane.</text>
</comment>
<comment type="subunit">
    <text>F-type ATPases have 2 components, CF(1) - the catalytic core - and CF(0) - the membrane proton channel. CF(1) has five subunits: alpha(3), beta(3), gamma(1), delta(1), epsilon(1). CF(0) has three main subunits: a, b and c.</text>
</comment>
<comment type="subcellular location">
    <subcellularLocation>
        <location evidence="1">Cell membrane</location>
        <topology evidence="1">Peripheral membrane protein</topology>
    </subcellularLocation>
</comment>
<comment type="similarity">
    <text evidence="1">Belongs to the ATPase epsilon chain family.</text>
</comment>
<sequence>MSKNKTKLIITTPQGYFFNDDVEIVTLKTTEGYIGIQKDSQSLIASIKPSKLFINQINSKDLKICAISGGIAFIDKNEIKIITDAIEFKEDIDLERAKKGKEIIEQKLKKPNLSKSKIEEYNLKIEKANNRINVKNNSDTF</sequence>
<accession>Q6KI83</accession>
<protein>
    <recommendedName>
        <fullName evidence="1">ATP synthase epsilon chain</fullName>
    </recommendedName>
    <alternativeName>
        <fullName evidence="1">ATP synthase F1 sector epsilon subunit</fullName>
    </alternativeName>
    <alternativeName>
        <fullName evidence="1">F-ATPase epsilon subunit</fullName>
    </alternativeName>
</protein>
<gene>
    <name evidence="1" type="primary">atpC</name>
    <name type="ordered locus">MMOB2070</name>
</gene>
<feature type="chain" id="PRO_0000188162" description="ATP synthase epsilon chain">
    <location>
        <begin position="1"/>
        <end position="141"/>
    </location>
</feature>
<organism>
    <name type="scientific">Mycoplasma mobile (strain ATCC 43663 / 163K / NCTC 11711)</name>
    <name type="common">Mesomycoplasma mobile</name>
    <dbReference type="NCBI Taxonomy" id="267748"/>
    <lineage>
        <taxon>Bacteria</taxon>
        <taxon>Bacillati</taxon>
        <taxon>Mycoplasmatota</taxon>
        <taxon>Mycoplasmoidales</taxon>
        <taxon>Metamycoplasmataceae</taxon>
        <taxon>Mesomycoplasma</taxon>
    </lineage>
</organism>